<protein>
    <recommendedName>
        <fullName evidence="1">NADH-quinone oxidoreductase subunit D</fullName>
        <ecNumber evidence="1">7.1.1.-</ecNumber>
    </recommendedName>
    <alternativeName>
        <fullName evidence="1">NADH dehydrogenase I subunit D</fullName>
    </alternativeName>
    <alternativeName>
        <fullName evidence="1">NDH-1 subunit D</fullName>
    </alternativeName>
</protein>
<accession>Q3YS37</accession>
<evidence type="ECO:0000255" key="1">
    <source>
        <dbReference type="HAMAP-Rule" id="MF_01358"/>
    </source>
</evidence>
<name>NUOD_EHRCJ</name>
<keyword id="KW-0997">Cell inner membrane</keyword>
<keyword id="KW-1003">Cell membrane</keyword>
<keyword id="KW-0472">Membrane</keyword>
<keyword id="KW-0520">NAD</keyword>
<keyword id="KW-0874">Quinone</keyword>
<keyword id="KW-1278">Translocase</keyword>
<keyword id="KW-0813">Transport</keyword>
<keyword id="KW-0830">Ubiquinone</keyword>
<sequence>MSDQVKITPMTLNFGPQHPAAHGVMRLVLEMGGEVIERIDPHIGLLHRGTEKLIEYKTYLQALPYFDRLDYVSPMAQEHAYSLCVEKLLKCEIPIRAKYLRVIFCELTRILNHLLNISSQALDIGAMTPLLWMFEEREKILGFYERASGARFHSAYIRPGGVAADVPSDLIDDIFKFVSTFSKFMDDIDDLLTENRIWKQRNVDIGVVSKKQALDWGFSGPMLRACGIPWDLRKSQPYEIYEDLEFEIPVGENGDCYDRYLVRMAEIRQSIKLLEQCLDRLPDGPVKTDDRKIAPPKRSEMKESMEALIHHFKLYSEGYSVPVGETYMAVEAPKGEFGVYIVSDGTNKPYRCRIRAPGFAHLQAIDIIAKGHMLADLTAIIGSLDIVFGEIDR</sequence>
<organism>
    <name type="scientific">Ehrlichia canis (strain Jake)</name>
    <dbReference type="NCBI Taxonomy" id="269484"/>
    <lineage>
        <taxon>Bacteria</taxon>
        <taxon>Pseudomonadati</taxon>
        <taxon>Pseudomonadota</taxon>
        <taxon>Alphaproteobacteria</taxon>
        <taxon>Rickettsiales</taxon>
        <taxon>Anaplasmataceae</taxon>
        <taxon>Ehrlichia</taxon>
    </lineage>
</organism>
<feature type="chain" id="PRO_0000357809" description="NADH-quinone oxidoreductase subunit D">
    <location>
        <begin position="1"/>
        <end position="393"/>
    </location>
</feature>
<comment type="function">
    <text evidence="1">NDH-1 shuttles electrons from NADH, via FMN and iron-sulfur (Fe-S) centers, to quinones in the respiratory chain. The immediate electron acceptor for the enzyme in this species is believed to be ubiquinone. Couples the redox reaction to proton translocation (for every two electrons transferred, four hydrogen ions are translocated across the cytoplasmic membrane), and thus conserves the redox energy in a proton gradient.</text>
</comment>
<comment type="catalytic activity">
    <reaction evidence="1">
        <text>a quinone + NADH + 5 H(+)(in) = a quinol + NAD(+) + 4 H(+)(out)</text>
        <dbReference type="Rhea" id="RHEA:57888"/>
        <dbReference type="ChEBI" id="CHEBI:15378"/>
        <dbReference type="ChEBI" id="CHEBI:24646"/>
        <dbReference type="ChEBI" id="CHEBI:57540"/>
        <dbReference type="ChEBI" id="CHEBI:57945"/>
        <dbReference type="ChEBI" id="CHEBI:132124"/>
    </reaction>
</comment>
<comment type="subunit">
    <text evidence="1">NDH-1 is composed of 14 different subunits. Subunits NuoB, C, D, E, F, and G constitute the peripheral sector of the complex.</text>
</comment>
<comment type="subcellular location">
    <subcellularLocation>
        <location evidence="1">Cell inner membrane</location>
        <topology evidence="1">Peripheral membrane protein</topology>
        <orientation evidence="1">Cytoplasmic side</orientation>
    </subcellularLocation>
</comment>
<comment type="similarity">
    <text evidence="1">Belongs to the complex I 49 kDa subunit family.</text>
</comment>
<gene>
    <name evidence="1" type="primary">nuoD</name>
    <name type="ordered locus">Ecaj_0426</name>
</gene>
<dbReference type="EC" id="7.1.1.-" evidence="1"/>
<dbReference type="EMBL" id="CP000107">
    <property type="protein sequence ID" value="AAZ68468.1"/>
    <property type="molecule type" value="Genomic_DNA"/>
</dbReference>
<dbReference type="RefSeq" id="WP_011304546.1">
    <property type="nucleotide sequence ID" value="NC_007354.1"/>
</dbReference>
<dbReference type="SMR" id="Q3YS37"/>
<dbReference type="FunCoup" id="Q3YS37">
    <property type="interactions" value="233"/>
</dbReference>
<dbReference type="STRING" id="269484.Ecaj_0426"/>
<dbReference type="KEGG" id="ecn:Ecaj_0426"/>
<dbReference type="eggNOG" id="COG0649">
    <property type="taxonomic scope" value="Bacteria"/>
</dbReference>
<dbReference type="HOGENOM" id="CLU_015134_1_1_5"/>
<dbReference type="InParanoid" id="Q3YS37"/>
<dbReference type="Proteomes" id="UP000000435">
    <property type="component" value="Chromosome"/>
</dbReference>
<dbReference type="GO" id="GO:0005886">
    <property type="term" value="C:plasma membrane"/>
    <property type="evidence" value="ECO:0007669"/>
    <property type="project" value="UniProtKB-SubCell"/>
</dbReference>
<dbReference type="GO" id="GO:0051287">
    <property type="term" value="F:NAD binding"/>
    <property type="evidence" value="ECO:0007669"/>
    <property type="project" value="InterPro"/>
</dbReference>
<dbReference type="GO" id="GO:0050136">
    <property type="term" value="F:NADH:ubiquinone reductase (non-electrogenic) activity"/>
    <property type="evidence" value="ECO:0007669"/>
    <property type="project" value="UniProtKB-UniRule"/>
</dbReference>
<dbReference type="GO" id="GO:0048038">
    <property type="term" value="F:quinone binding"/>
    <property type="evidence" value="ECO:0007669"/>
    <property type="project" value="UniProtKB-KW"/>
</dbReference>
<dbReference type="FunFam" id="1.10.645.10:FF:000005">
    <property type="entry name" value="NADH-quinone oxidoreductase subunit D"/>
    <property type="match status" value="1"/>
</dbReference>
<dbReference type="Gene3D" id="1.10.645.10">
    <property type="entry name" value="Cytochrome-c3 Hydrogenase, chain B"/>
    <property type="match status" value="1"/>
</dbReference>
<dbReference type="HAMAP" id="MF_01358">
    <property type="entry name" value="NDH1_NuoD"/>
    <property type="match status" value="1"/>
</dbReference>
<dbReference type="InterPro" id="IPR001135">
    <property type="entry name" value="NADH_Q_OxRdtase_suD"/>
</dbReference>
<dbReference type="InterPro" id="IPR014029">
    <property type="entry name" value="NADH_UbQ_OxRdtase_49kDa_CS"/>
</dbReference>
<dbReference type="InterPro" id="IPR022885">
    <property type="entry name" value="NDH1_su_D/H"/>
</dbReference>
<dbReference type="InterPro" id="IPR029014">
    <property type="entry name" value="NiFe-Hase_large"/>
</dbReference>
<dbReference type="NCBIfam" id="TIGR01962">
    <property type="entry name" value="NuoD"/>
    <property type="match status" value="1"/>
</dbReference>
<dbReference type="NCBIfam" id="NF004739">
    <property type="entry name" value="PRK06075.1"/>
    <property type="match status" value="1"/>
</dbReference>
<dbReference type="PANTHER" id="PTHR11993:SF10">
    <property type="entry name" value="NADH DEHYDROGENASE [UBIQUINONE] IRON-SULFUR PROTEIN 2, MITOCHONDRIAL"/>
    <property type="match status" value="1"/>
</dbReference>
<dbReference type="PANTHER" id="PTHR11993">
    <property type="entry name" value="NADH-UBIQUINONE OXIDOREDUCTASE 49 KDA SUBUNIT"/>
    <property type="match status" value="1"/>
</dbReference>
<dbReference type="Pfam" id="PF00346">
    <property type="entry name" value="Complex1_49kDa"/>
    <property type="match status" value="1"/>
</dbReference>
<dbReference type="SUPFAM" id="SSF56762">
    <property type="entry name" value="HydB/Nqo4-like"/>
    <property type="match status" value="1"/>
</dbReference>
<dbReference type="PROSITE" id="PS00535">
    <property type="entry name" value="COMPLEX1_49K"/>
    <property type="match status" value="1"/>
</dbReference>
<proteinExistence type="inferred from homology"/>
<reference key="1">
    <citation type="journal article" date="2006" name="J. Bacteriol.">
        <title>The genome of the obligately intracellular bacterium Ehrlichia canis reveals themes of complex membrane structure and immune evasion strategies.</title>
        <authorList>
            <person name="Mavromatis K."/>
            <person name="Doyle C.K."/>
            <person name="Lykidis A."/>
            <person name="Ivanova N."/>
            <person name="Francino M.P."/>
            <person name="Chain P."/>
            <person name="Shin M."/>
            <person name="Malfatti S."/>
            <person name="Larimer F."/>
            <person name="Copeland A."/>
            <person name="Detter J.C."/>
            <person name="Land M."/>
            <person name="Richardson P.M."/>
            <person name="Yu X.J."/>
            <person name="Walker D.H."/>
            <person name="McBride J.W."/>
            <person name="Kyrpides N.C."/>
        </authorList>
    </citation>
    <scope>NUCLEOTIDE SEQUENCE [LARGE SCALE GENOMIC DNA]</scope>
    <source>
        <strain>Jake</strain>
    </source>
</reference>